<gene>
    <name evidence="1" type="primary">ctaB</name>
    <name type="ordered locus">Kcr_0887</name>
</gene>
<protein>
    <recommendedName>
        <fullName evidence="1">Protoheme IX farnesyltransferase</fullName>
        <ecNumber evidence="1">2.5.1.141</ecNumber>
    </recommendedName>
    <alternativeName>
        <fullName evidence="1">Heme B farnesyltransferase</fullName>
    </alternativeName>
    <alternativeName>
        <fullName evidence="1">Heme O synthase</fullName>
    </alternativeName>
</protein>
<evidence type="ECO:0000255" key="1">
    <source>
        <dbReference type="HAMAP-Rule" id="MF_00154"/>
    </source>
</evidence>
<proteinExistence type="inferred from homology"/>
<name>COXX_KORCO</name>
<dbReference type="EC" id="2.5.1.141" evidence="1"/>
<dbReference type="EMBL" id="CP000968">
    <property type="protein sequence ID" value="ACB07633.1"/>
    <property type="molecule type" value="Genomic_DNA"/>
</dbReference>
<dbReference type="RefSeq" id="WP_012309530.1">
    <property type="nucleotide sequence ID" value="NC_010482.1"/>
</dbReference>
<dbReference type="SMR" id="B1L5A4"/>
<dbReference type="FunCoup" id="B1L5A4">
    <property type="interactions" value="163"/>
</dbReference>
<dbReference type="STRING" id="374847.Kcr_0887"/>
<dbReference type="EnsemblBacteria" id="ACB07633">
    <property type="protein sequence ID" value="ACB07633"/>
    <property type="gene ID" value="Kcr_0887"/>
</dbReference>
<dbReference type="GeneID" id="6094164"/>
<dbReference type="KEGG" id="kcr:Kcr_0887"/>
<dbReference type="eggNOG" id="arCOG00479">
    <property type="taxonomic scope" value="Archaea"/>
</dbReference>
<dbReference type="HOGENOM" id="CLU_029631_0_1_2"/>
<dbReference type="InParanoid" id="B1L5A4"/>
<dbReference type="OrthoDB" id="131615at2157"/>
<dbReference type="PhylomeDB" id="B1L5A4"/>
<dbReference type="UniPathway" id="UPA00834">
    <property type="reaction ID" value="UER00712"/>
</dbReference>
<dbReference type="Proteomes" id="UP000001686">
    <property type="component" value="Chromosome"/>
</dbReference>
<dbReference type="GO" id="GO:0005886">
    <property type="term" value="C:plasma membrane"/>
    <property type="evidence" value="ECO:0007669"/>
    <property type="project" value="UniProtKB-SubCell"/>
</dbReference>
<dbReference type="GO" id="GO:0008495">
    <property type="term" value="F:protoheme IX farnesyltransferase activity"/>
    <property type="evidence" value="ECO:0000318"/>
    <property type="project" value="GO_Central"/>
</dbReference>
<dbReference type="GO" id="GO:0006783">
    <property type="term" value="P:heme biosynthetic process"/>
    <property type="evidence" value="ECO:0000318"/>
    <property type="project" value="GO_Central"/>
</dbReference>
<dbReference type="GO" id="GO:0048034">
    <property type="term" value="P:heme O biosynthetic process"/>
    <property type="evidence" value="ECO:0007669"/>
    <property type="project" value="UniProtKB-UniRule"/>
</dbReference>
<dbReference type="CDD" id="cd13957">
    <property type="entry name" value="PT_UbiA_Cox10"/>
    <property type="match status" value="1"/>
</dbReference>
<dbReference type="Gene3D" id="1.10.357.140">
    <property type="entry name" value="UbiA prenyltransferase"/>
    <property type="match status" value="1"/>
</dbReference>
<dbReference type="HAMAP" id="MF_00154">
    <property type="entry name" value="CyoE_CtaB"/>
    <property type="match status" value="1"/>
</dbReference>
<dbReference type="InterPro" id="IPR006369">
    <property type="entry name" value="Protohaem_IX_farnesylTrfase"/>
</dbReference>
<dbReference type="InterPro" id="IPR000537">
    <property type="entry name" value="UbiA_prenyltransferase"/>
</dbReference>
<dbReference type="InterPro" id="IPR030470">
    <property type="entry name" value="UbiA_prenylTrfase_CS"/>
</dbReference>
<dbReference type="InterPro" id="IPR044878">
    <property type="entry name" value="UbiA_sf"/>
</dbReference>
<dbReference type="NCBIfam" id="TIGR01473">
    <property type="entry name" value="cyoE_ctaB"/>
    <property type="match status" value="1"/>
</dbReference>
<dbReference type="PANTHER" id="PTHR43448">
    <property type="entry name" value="PROTOHEME IX FARNESYLTRANSFERASE, MITOCHONDRIAL"/>
    <property type="match status" value="1"/>
</dbReference>
<dbReference type="PANTHER" id="PTHR43448:SF2">
    <property type="entry name" value="PROTOHEME IX FARNESYLTRANSFERASE, MITOCHONDRIAL"/>
    <property type="match status" value="1"/>
</dbReference>
<dbReference type="Pfam" id="PF01040">
    <property type="entry name" value="UbiA"/>
    <property type="match status" value="1"/>
</dbReference>
<dbReference type="PROSITE" id="PS00943">
    <property type="entry name" value="UBIA"/>
    <property type="match status" value="1"/>
</dbReference>
<organism>
    <name type="scientific">Korarchaeum cryptofilum (strain OPF8)</name>
    <dbReference type="NCBI Taxonomy" id="374847"/>
    <lineage>
        <taxon>Archaea</taxon>
        <taxon>Thermoproteota</taxon>
        <taxon>Candidatus Korarchaeia</taxon>
        <taxon>Candidatus Korarchaeales</taxon>
        <taxon>Candidatus Korarchaeaceae</taxon>
        <taxon>Candidatus Korarchaeum</taxon>
    </lineage>
</organism>
<feature type="chain" id="PRO_0000346087" description="Protoheme IX farnesyltransferase">
    <location>
        <begin position="1"/>
        <end position="294"/>
    </location>
</feature>
<feature type="transmembrane region" description="Helical" evidence="1">
    <location>
        <begin position="19"/>
        <end position="39"/>
    </location>
</feature>
<feature type="transmembrane region" description="Helical" evidence="1">
    <location>
        <begin position="41"/>
        <end position="61"/>
    </location>
</feature>
<feature type="transmembrane region" description="Helical" evidence="1">
    <location>
        <begin position="89"/>
        <end position="109"/>
    </location>
</feature>
<feature type="transmembrane region" description="Helical" evidence="1">
    <location>
        <begin position="111"/>
        <end position="131"/>
    </location>
</feature>
<feature type="transmembrane region" description="Helical" evidence="1">
    <location>
        <begin position="138"/>
        <end position="158"/>
    </location>
</feature>
<feature type="transmembrane region" description="Helical" evidence="1">
    <location>
        <begin position="166"/>
        <end position="186"/>
    </location>
</feature>
<feature type="transmembrane region" description="Helical" evidence="1">
    <location>
        <begin position="218"/>
        <end position="238"/>
    </location>
</feature>
<feature type="transmembrane region" description="Helical" evidence="1">
    <location>
        <begin position="272"/>
        <end position="292"/>
    </location>
</feature>
<reference key="1">
    <citation type="journal article" date="2008" name="Proc. Natl. Acad. Sci. U.S.A.">
        <title>A korarchaeal genome reveals new insights into the evolution of the Archaea.</title>
        <authorList>
            <person name="Elkins J.G."/>
            <person name="Podar M."/>
            <person name="Graham D.E."/>
            <person name="Makarova K.S."/>
            <person name="Wolf Y."/>
            <person name="Randau L."/>
            <person name="Hedlund B.P."/>
            <person name="Brochier-Armanet C."/>
            <person name="Kunin V."/>
            <person name="Anderson I."/>
            <person name="Lapidus A."/>
            <person name="Goltsman E."/>
            <person name="Barry K."/>
            <person name="Koonin E.V."/>
            <person name="Hugenholtz P."/>
            <person name="Kyrpides N."/>
            <person name="Wanner G."/>
            <person name="Richardson P."/>
            <person name="Keller M."/>
            <person name="Stetter K.O."/>
        </authorList>
    </citation>
    <scope>NUCLEOTIDE SEQUENCE [LARGE SCALE GENOMIC DNA]</scope>
    <source>
        <strain>OPF8</strain>
    </source>
</reference>
<keyword id="KW-1003">Cell membrane</keyword>
<keyword id="KW-0350">Heme biosynthesis</keyword>
<keyword id="KW-0472">Membrane</keyword>
<keyword id="KW-1185">Reference proteome</keyword>
<keyword id="KW-0808">Transferase</keyword>
<keyword id="KW-0812">Transmembrane</keyword>
<keyword id="KW-1133">Transmembrane helix</keyword>
<sequence length="294" mass="32268">MQVEVFKVKLSDLLCLTKPKQTFLLLLTSIFTYVGAGGMRLDALLLLTAAMLLSISGTTSVNMALDADIDAMMPRTKDRPVPSGRVSRVEALSFGLLLFIVGLGLSYLINPWTAFATSLGMAFDILVYTMWTKRRTPLSIIFGGVAGAAPSLAGWAAARGSIELQAIMIALITILWIPSHIWYISIYYLDDYAAARVPMAPVVWGIERTSKLIVASNVLMIILQLLLFLMGPLGPIFLVLSLPITLRFLIHSIRYARSPSRGEARRMYKVASPVEGVIFLAIALDGIFRILWSS</sequence>
<accession>B1L5A4</accession>
<comment type="function">
    <text evidence="1">Converts heme B (protoheme IX) to heme O by substitution of the vinyl group on carbon 2 of heme B porphyrin ring with a hydroxyethyl farnesyl side group.</text>
</comment>
<comment type="catalytic activity">
    <reaction evidence="1">
        <text>heme b + (2E,6E)-farnesyl diphosphate + H2O = Fe(II)-heme o + diphosphate</text>
        <dbReference type="Rhea" id="RHEA:28070"/>
        <dbReference type="ChEBI" id="CHEBI:15377"/>
        <dbReference type="ChEBI" id="CHEBI:33019"/>
        <dbReference type="ChEBI" id="CHEBI:60344"/>
        <dbReference type="ChEBI" id="CHEBI:60530"/>
        <dbReference type="ChEBI" id="CHEBI:175763"/>
        <dbReference type="EC" id="2.5.1.141"/>
    </reaction>
</comment>
<comment type="pathway">
    <text evidence="1">Porphyrin-containing compound metabolism; heme O biosynthesis; heme O from protoheme: step 1/1.</text>
</comment>
<comment type="subcellular location">
    <subcellularLocation>
        <location evidence="1">Cell membrane</location>
        <topology evidence="1">Multi-pass membrane protein</topology>
    </subcellularLocation>
</comment>
<comment type="miscellaneous">
    <text evidence="1">Carbon 2 of the heme B porphyrin ring is defined according to the Fischer nomenclature.</text>
</comment>
<comment type="similarity">
    <text evidence="1">Belongs to the UbiA prenyltransferase family. Protoheme IX farnesyltransferase subfamily.</text>
</comment>